<evidence type="ECO:0000255" key="1">
    <source>
        <dbReference type="HAMAP-Rule" id="MF_00302"/>
    </source>
</evidence>
<accession>B4TD06</accession>
<organism>
    <name type="scientific">Salmonella heidelberg (strain SL476)</name>
    <dbReference type="NCBI Taxonomy" id="454169"/>
    <lineage>
        <taxon>Bacteria</taxon>
        <taxon>Pseudomonadati</taxon>
        <taxon>Pseudomonadota</taxon>
        <taxon>Gammaproteobacteria</taxon>
        <taxon>Enterobacterales</taxon>
        <taxon>Enterobacteriaceae</taxon>
        <taxon>Salmonella</taxon>
    </lineage>
</organism>
<dbReference type="EMBL" id="CP001120">
    <property type="protein sequence ID" value="ACF68909.1"/>
    <property type="molecule type" value="Genomic_DNA"/>
</dbReference>
<dbReference type="RefSeq" id="WP_000520789.1">
    <property type="nucleotide sequence ID" value="NC_011083.1"/>
</dbReference>
<dbReference type="SMR" id="B4TD06"/>
<dbReference type="KEGG" id="seh:SeHA_C1043"/>
<dbReference type="HOGENOM" id="CLU_134358_2_1_6"/>
<dbReference type="Proteomes" id="UP000001866">
    <property type="component" value="Chromosome"/>
</dbReference>
<dbReference type="GO" id="GO:0030163">
    <property type="term" value="P:protein catabolic process"/>
    <property type="evidence" value="ECO:0007669"/>
    <property type="project" value="InterPro"/>
</dbReference>
<dbReference type="GO" id="GO:0006508">
    <property type="term" value="P:proteolysis"/>
    <property type="evidence" value="ECO:0007669"/>
    <property type="project" value="UniProtKB-UniRule"/>
</dbReference>
<dbReference type="FunFam" id="3.30.1390.10:FF:000002">
    <property type="entry name" value="ATP-dependent Clp protease adapter protein ClpS"/>
    <property type="match status" value="1"/>
</dbReference>
<dbReference type="Gene3D" id="3.30.1390.10">
    <property type="match status" value="1"/>
</dbReference>
<dbReference type="HAMAP" id="MF_00302">
    <property type="entry name" value="ClpS"/>
    <property type="match status" value="1"/>
</dbReference>
<dbReference type="InterPro" id="IPR022935">
    <property type="entry name" value="ClpS"/>
</dbReference>
<dbReference type="InterPro" id="IPR003769">
    <property type="entry name" value="ClpS_core"/>
</dbReference>
<dbReference type="InterPro" id="IPR014719">
    <property type="entry name" value="Ribosomal_bL12_C/ClpS-like"/>
</dbReference>
<dbReference type="NCBIfam" id="NF000670">
    <property type="entry name" value="PRK00033.1-3"/>
    <property type="match status" value="1"/>
</dbReference>
<dbReference type="NCBIfam" id="NF000672">
    <property type="entry name" value="PRK00033.1-5"/>
    <property type="match status" value="1"/>
</dbReference>
<dbReference type="PANTHER" id="PTHR33473:SF19">
    <property type="entry name" value="ATP-DEPENDENT CLP PROTEASE ADAPTER PROTEIN CLPS"/>
    <property type="match status" value="1"/>
</dbReference>
<dbReference type="PANTHER" id="PTHR33473">
    <property type="entry name" value="ATP-DEPENDENT CLP PROTEASE ADAPTER PROTEIN CLPS1, CHLOROPLASTIC"/>
    <property type="match status" value="1"/>
</dbReference>
<dbReference type="Pfam" id="PF02617">
    <property type="entry name" value="ClpS"/>
    <property type="match status" value="1"/>
</dbReference>
<dbReference type="SUPFAM" id="SSF54736">
    <property type="entry name" value="ClpS-like"/>
    <property type="match status" value="1"/>
</dbReference>
<protein>
    <recommendedName>
        <fullName evidence="1">ATP-dependent Clp protease adapter protein ClpS</fullName>
    </recommendedName>
</protein>
<feature type="chain" id="PRO_1000115473" description="ATP-dependent Clp protease adapter protein ClpS">
    <location>
        <begin position="1"/>
        <end position="106"/>
    </location>
</feature>
<reference key="1">
    <citation type="journal article" date="2011" name="J. Bacteriol.">
        <title>Comparative genomics of 28 Salmonella enterica isolates: evidence for CRISPR-mediated adaptive sublineage evolution.</title>
        <authorList>
            <person name="Fricke W.F."/>
            <person name="Mammel M.K."/>
            <person name="McDermott P.F."/>
            <person name="Tartera C."/>
            <person name="White D.G."/>
            <person name="Leclerc J.E."/>
            <person name="Ravel J."/>
            <person name="Cebula T.A."/>
        </authorList>
    </citation>
    <scope>NUCLEOTIDE SEQUENCE [LARGE SCALE GENOMIC DNA]</scope>
    <source>
        <strain>SL476</strain>
    </source>
</reference>
<name>CLPS_SALHS</name>
<gene>
    <name evidence="1" type="primary">clpS</name>
    <name type="ordered locus">SeHA_C1043</name>
</gene>
<comment type="function">
    <text evidence="1">Involved in the modulation of the specificity of the ClpAP-mediated ATP-dependent protein degradation.</text>
</comment>
<comment type="subunit">
    <text evidence="1">Binds to the N-terminal domain of the chaperone ClpA.</text>
</comment>
<comment type="similarity">
    <text evidence="1">Belongs to the ClpS family.</text>
</comment>
<proteinExistence type="inferred from homology"/>
<sequence>MGKTNDWLDFDQLVEDSVRDALKPPSMYKVILVNDDYTPMEFVIDVLQKFFSYDVERATQLMLAVHYQGKAICGVFTAEVAETKVAMVNKYARENEHPLLCTLEKA</sequence>